<sequence length="158" mass="16654">MKSLQKGFTLIELMIVVAIIGILAAFAIPAYNDYIARSQAAEGLTLADGLKIRIADHLENGSCMETANAGAGEKGNQDIGKYGLAEISGDYDESKTDAKDENGCKVTITYGQGTAGEKVSKLIKGKTLILLQLVNGSYTQGGGDIDPKFVPNAVKKVQ</sequence>
<feature type="propeptide" id="PRO_0000024133" description="Leader sequence" evidence="4">
    <location>
        <begin position="1"/>
        <end position="7"/>
    </location>
</feature>
<feature type="chain" id="PRO_0000024134" description="Type IV major fimbrial protein FimA">
    <location>
        <begin position="8"/>
        <end position="158"/>
    </location>
</feature>
<feature type="transmembrane region" description="Helical" evidence="3">
    <location>
        <begin position="8"/>
        <end position="28"/>
    </location>
</feature>
<feature type="modified residue" description="N-methylphenylalanine" evidence="4">
    <location>
        <position position="8"/>
    </location>
</feature>
<feature type="disulfide bond" evidence="2">
    <location>
        <begin position="63"/>
        <end position="104"/>
    </location>
</feature>
<keyword id="KW-1015">Disulfide bond</keyword>
<keyword id="KW-0281">Fimbrium</keyword>
<keyword id="KW-0472">Membrane</keyword>
<keyword id="KW-0488">Methylation</keyword>
<keyword id="KW-0812">Transmembrane</keyword>
<keyword id="KW-1133">Transmembrane helix</keyword>
<evidence type="ECO:0000250" key="1">
    <source>
        <dbReference type="UniProtKB" id="A5EWR9"/>
    </source>
</evidence>
<evidence type="ECO:0000250" key="2">
    <source>
        <dbReference type="UniProtKB" id="P02975"/>
    </source>
</evidence>
<evidence type="ECO:0000255" key="3"/>
<evidence type="ECO:0000255" key="4">
    <source>
        <dbReference type="PROSITE-ProRule" id="PRU01070"/>
    </source>
</evidence>
<evidence type="ECO:0000305" key="5"/>
<reference key="1">
    <citation type="journal article" date="1991" name="Mol. Microbiol.">
        <title>Gene sequences and comparison of the fimbrial subunits representative of Bacteroides nodosus serotypes A to I: class I and class II strains.</title>
        <authorList>
            <person name="Mattick J.S."/>
            <person name="Anderson B.J."/>
            <person name="Cox P.T."/>
            <person name="Dalrymple B.P."/>
            <person name="Bills M.M."/>
            <person name="Hobbs M."/>
            <person name="Egerton J.R."/>
        </authorList>
    </citation>
    <scope>NUCLEOTIDE SEQUENCE [GENOMIC DNA]</scope>
    <source>
        <strain>Serogroup F1 isolate VCS1017</strain>
    </source>
</reference>
<proteinExistence type="inferred from homology"/>
<organism>
    <name type="scientific">Dichelobacter nodosus</name>
    <name type="common">Bacteroides nodosus</name>
    <dbReference type="NCBI Taxonomy" id="870"/>
    <lineage>
        <taxon>Bacteria</taxon>
        <taxon>Pseudomonadati</taxon>
        <taxon>Pseudomonadota</taxon>
        <taxon>Gammaproteobacteria</taxon>
        <taxon>Cardiobacteriales</taxon>
        <taxon>Cardiobacteriaceae</taxon>
        <taxon>Dichelobacter</taxon>
    </lineage>
</organism>
<protein>
    <recommendedName>
        <fullName>Type IV major fimbrial protein FimA</fullName>
    </recommendedName>
    <alternativeName>
        <fullName>Pilin</fullName>
    </alternativeName>
    <alternativeName>
        <fullName>Serogroup F1</fullName>
    </alternativeName>
</protein>
<gene>
    <name type="primary">fimA</name>
</gene>
<comment type="function">
    <text evidence="1">Major component of the type IV fimbriae that plays an essential role in twitching motility, natural transformation, and protease secretion.</text>
</comment>
<comment type="subunit">
    <text>The pili are polar flexible filaments of about 5.4 nanometers diameter and 2.5 micrometers average length; they consist of only a single polypeptide chain arranged in a helical configuration of five subunits per turn in the assembled pilus.</text>
</comment>
<comment type="subcellular location">
    <subcellularLocation>
        <location evidence="1">Fimbrium</location>
    </subcellularLocation>
    <subcellularLocation>
        <location evidence="3">Membrane</location>
        <topology evidence="3">Single-pass membrane protein</topology>
    </subcellularLocation>
</comment>
<comment type="similarity">
    <text evidence="5">Belongs to the N-Me-Phe pilin family.</text>
</comment>
<dbReference type="EMBL" id="X52408">
    <property type="protein sequence ID" value="CAA36658.1"/>
    <property type="molecule type" value="Genomic_DNA"/>
</dbReference>
<dbReference type="PIR" id="S15263">
    <property type="entry name" value="S15263"/>
</dbReference>
<dbReference type="SMR" id="P17826"/>
<dbReference type="GO" id="GO:0016020">
    <property type="term" value="C:membrane"/>
    <property type="evidence" value="ECO:0007669"/>
    <property type="project" value="UniProtKB-SubCell"/>
</dbReference>
<dbReference type="GO" id="GO:0044096">
    <property type="term" value="C:type IV pilus"/>
    <property type="evidence" value="ECO:0007669"/>
    <property type="project" value="TreeGrafter"/>
</dbReference>
<dbReference type="GO" id="GO:0007155">
    <property type="term" value="P:cell adhesion"/>
    <property type="evidence" value="ECO:0007669"/>
    <property type="project" value="InterPro"/>
</dbReference>
<dbReference type="GO" id="GO:0043107">
    <property type="term" value="P:type IV pilus-dependent motility"/>
    <property type="evidence" value="ECO:0007669"/>
    <property type="project" value="TreeGrafter"/>
</dbReference>
<dbReference type="Gene3D" id="3.30.700.10">
    <property type="entry name" value="Glycoprotein, Type 4 Pilin"/>
    <property type="match status" value="1"/>
</dbReference>
<dbReference type="InterPro" id="IPR012902">
    <property type="entry name" value="N_methyl_site"/>
</dbReference>
<dbReference type="InterPro" id="IPR001082">
    <property type="entry name" value="Pilin"/>
</dbReference>
<dbReference type="InterPro" id="IPR045584">
    <property type="entry name" value="Pilin-like"/>
</dbReference>
<dbReference type="InterPro" id="IPR050470">
    <property type="entry name" value="T4P/T2SS_Core"/>
</dbReference>
<dbReference type="NCBIfam" id="TIGR02532">
    <property type="entry name" value="IV_pilin_GFxxxE"/>
    <property type="match status" value="1"/>
</dbReference>
<dbReference type="PANTHER" id="PTHR30093">
    <property type="entry name" value="GENERAL SECRETION PATHWAY PROTEIN G"/>
    <property type="match status" value="1"/>
</dbReference>
<dbReference type="PANTHER" id="PTHR30093:SF34">
    <property type="entry name" value="PREPILIN PEPTIDASE-DEPENDENT PROTEIN D"/>
    <property type="match status" value="1"/>
</dbReference>
<dbReference type="Pfam" id="PF07963">
    <property type="entry name" value="N_methyl"/>
    <property type="match status" value="1"/>
</dbReference>
<dbReference type="Pfam" id="PF00114">
    <property type="entry name" value="Pilin"/>
    <property type="match status" value="1"/>
</dbReference>
<dbReference type="SUPFAM" id="SSF54523">
    <property type="entry name" value="Pili subunits"/>
    <property type="match status" value="1"/>
</dbReference>
<dbReference type="PROSITE" id="PS00409">
    <property type="entry name" value="PROKAR_NTER_METHYL"/>
    <property type="match status" value="1"/>
</dbReference>
<name>FMAF_DICNO</name>
<accession>P17826</accession>